<reference key="1">
    <citation type="submission" date="2007-03" db="EMBL/GenBank/DDBJ databases">
        <title>Complete sequence of chromosome 1 of Burkholderia vietnamiensis G4.</title>
        <authorList>
            <consortium name="US DOE Joint Genome Institute"/>
            <person name="Copeland A."/>
            <person name="Lucas S."/>
            <person name="Lapidus A."/>
            <person name="Barry K."/>
            <person name="Detter J.C."/>
            <person name="Glavina del Rio T."/>
            <person name="Hammon N."/>
            <person name="Israni S."/>
            <person name="Dalin E."/>
            <person name="Tice H."/>
            <person name="Pitluck S."/>
            <person name="Chain P."/>
            <person name="Malfatti S."/>
            <person name="Shin M."/>
            <person name="Vergez L."/>
            <person name="Schmutz J."/>
            <person name="Larimer F."/>
            <person name="Land M."/>
            <person name="Hauser L."/>
            <person name="Kyrpides N."/>
            <person name="Tiedje J."/>
            <person name="Richardson P."/>
        </authorList>
    </citation>
    <scope>NUCLEOTIDE SEQUENCE [LARGE SCALE GENOMIC DNA]</scope>
    <source>
        <strain>G4 / LMG 22486</strain>
    </source>
</reference>
<comment type="function">
    <text evidence="1">One of the primary rRNA binding proteins, it binds directly to 16S rRNA where it nucleates assembly of the head domain of the 30S subunit. Is located at the subunit interface close to the decoding center, probably blocks exit of the E-site tRNA.</text>
</comment>
<comment type="subunit">
    <text evidence="1">Part of the 30S ribosomal subunit. Contacts proteins S9 and S11.</text>
</comment>
<comment type="similarity">
    <text evidence="1">Belongs to the universal ribosomal protein uS7 family.</text>
</comment>
<gene>
    <name evidence="1" type="primary">rpsG</name>
    <name type="ordered locus">Bcep1808_0326</name>
</gene>
<evidence type="ECO:0000255" key="1">
    <source>
        <dbReference type="HAMAP-Rule" id="MF_00480"/>
    </source>
</evidence>
<evidence type="ECO:0000305" key="2"/>
<feature type="chain" id="PRO_1000014162" description="Small ribosomal subunit protein uS7">
    <location>
        <begin position="1"/>
        <end position="156"/>
    </location>
</feature>
<name>RS7_BURVG</name>
<keyword id="KW-0687">Ribonucleoprotein</keyword>
<keyword id="KW-0689">Ribosomal protein</keyword>
<keyword id="KW-0694">RNA-binding</keyword>
<keyword id="KW-0699">rRNA-binding</keyword>
<keyword id="KW-0820">tRNA-binding</keyword>
<protein>
    <recommendedName>
        <fullName evidence="1">Small ribosomal subunit protein uS7</fullName>
    </recommendedName>
    <alternativeName>
        <fullName evidence="2">30S ribosomal protein S7</fullName>
    </alternativeName>
</protein>
<sequence length="156" mass="17670">MPRRREVPKREVLPDPKFGNVDVAKFMNMLMLSGKKSVAERIVYGAFEQIQTKGGKDPLEVFTVALNNVKPVVEVKSRRVGGANYQVPVEVRPSRRMALAMRWLREAAKKRSEKSMALRLAGELSEAAEGRGGAMKKRDEVHRMAEANRAFSHFRF</sequence>
<accession>A4JAN6</accession>
<dbReference type="EMBL" id="CP000614">
    <property type="protein sequence ID" value="ABO53339.1"/>
    <property type="molecule type" value="Genomic_DNA"/>
</dbReference>
<dbReference type="SMR" id="A4JAN6"/>
<dbReference type="KEGG" id="bvi:Bcep1808_0326"/>
<dbReference type="eggNOG" id="COG0049">
    <property type="taxonomic scope" value="Bacteria"/>
</dbReference>
<dbReference type="HOGENOM" id="CLU_072226_1_1_4"/>
<dbReference type="Proteomes" id="UP000002287">
    <property type="component" value="Chromosome 1"/>
</dbReference>
<dbReference type="GO" id="GO:0015935">
    <property type="term" value="C:small ribosomal subunit"/>
    <property type="evidence" value="ECO:0007669"/>
    <property type="project" value="InterPro"/>
</dbReference>
<dbReference type="GO" id="GO:0019843">
    <property type="term" value="F:rRNA binding"/>
    <property type="evidence" value="ECO:0007669"/>
    <property type="project" value="UniProtKB-UniRule"/>
</dbReference>
<dbReference type="GO" id="GO:0003735">
    <property type="term" value="F:structural constituent of ribosome"/>
    <property type="evidence" value="ECO:0007669"/>
    <property type="project" value="InterPro"/>
</dbReference>
<dbReference type="GO" id="GO:0000049">
    <property type="term" value="F:tRNA binding"/>
    <property type="evidence" value="ECO:0007669"/>
    <property type="project" value="UniProtKB-UniRule"/>
</dbReference>
<dbReference type="GO" id="GO:0006412">
    <property type="term" value="P:translation"/>
    <property type="evidence" value="ECO:0007669"/>
    <property type="project" value="UniProtKB-UniRule"/>
</dbReference>
<dbReference type="CDD" id="cd14869">
    <property type="entry name" value="uS7_Bacteria"/>
    <property type="match status" value="1"/>
</dbReference>
<dbReference type="FunFam" id="1.10.455.10:FF:000001">
    <property type="entry name" value="30S ribosomal protein S7"/>
    <property type="match status" value="1"/>
</dbReference>
<dbReference type="Gene3D" id="1.10.455.10">
    <property type="entry name" value="Ribosomal protein S7 domain"/>
    <property type="match status" value="1"/>
</dbReference>
<dbReference type="HAMAP" id="MF_00480_B">
    <property type="entry name" value="Ribosomal_uS7_B"/>
    <property type="match status" value="1"/>
</dbReference>
<dbReference type="InterPro" id="IPR000235">
    <property type="entry name" value="Ribosomal_uS7"/>
</dbReference>
<dbReference type="InterPro" id="IPR005717">
    <property type="entry name" value="Ribosomal_uS7_bac/org-type"/>
</dbReference>
<dbReference type="InterPro" id="IPR020606">
    <property type="entry name" value="Ribosomal_uS7_CS"/>
</dbReference>
<dbReference type="InterPro" id="IPR023798">
    <property type="entry name" value="Ribosomal_uS7_dom"/>
</dbReference>
<dbReference type="InterPro" id="IPR036823">
    <property type="entry name" value="Ribosomal_uS7_dom_sf"/>
</dbReference>
<dbReference type="NCBIfam" id="TIGR01029">
    <property type="entry name" value="rpsG_bact"/>
    <property type="match status" value="1"/>
</dbReference>
<dbReference type="PANTHER" id="PTHR11205">
    <property type="entry name" value="RIBOSOMAL PROTEIN S7"/>
    <property type="match status" value="1"/>
</dbReference>
<dbReference type="Pfam" id="PF00177">
    <property type="entry name" value="Ribosomal_S7"/>
    <property type="match status" value="1"/>
</dbReference>
<dbReference type="PIRSF" id="PIRSF002122">
    <property type="entry name" value="RPS7p_RPS7a_RPS5e_RPS7o"/>
    <property type="match status" value="1"/>
</dbReference>
<dbReference type="SUPFAM" id="SSF47973">
    <property type="entry name" value="Ribosomal protein S7"/>
    <property type="match status" value="1"/>
</dbReference>
<dbReference type="PROSITE" id="PS00052">
    <property type="entry name" value="RIBOSOMAL_S7"/>
    <property type="match status" value="1"/>
</dbReference>
<proteinExistence type="inferred from homology"/>
<organism>
    <name type="scientific">Burkholderia vietnamiensis (strain G4 / LMG 22486)</name>
    <name type="common">Burkholderia cepacia (strain R1808)</name>
    <dbReference type="NCBI Taxonomy" id="269482"/>
    <lineage>
        <taxon>Bacteria</taxon>
        <taxon>Pseudomonadati</taxon>
        <taxon>Pseudomonadota</taxon>
        <taxon>Betaproteobacteria</taxon>
        <taxon>Burkholderiales</taxon>
        <taxon>Burkholderiaceae</taxon>
        <taxon>Burkholderia</taxon>
        <taxon>Burkholderia cepacia complex</taxon>
    </lineage>
</organism>